<protein>
    <recommendedName>
        <fullName>Purine nucleoside phosphorylase Cj1217c</fullName>
        <ecNumber evidence="2">2.4.2.1</ecNumber>
    </recommendedName>
    <alternativeName>
        <fullName>Adenosine deaminase Cj1217c</fullName>
        <ecNumber evidence="2">3.5.4.4</ecNumber>
    </alternativeName>
    <alternativeName>
        <fullName>S-methyl-5'-thioadenosine phosphorylase Cj1217c</fullName>
        <ecNumber evidence="2">2.4.2.28</ecNumber>
    </alternativeName>
</protein>
<accession>Q9PN78</accession>
<accession>Q0P939</accession>
<comment type="function">
    <text evidence="2">Purine nucleoside enzyme that catalyzes the phosphorolysis of adenosine and inosine nucleosides, yielding D-ribose 1-phosphate and the respective free bases, adenine and hypoxanthine. Also catalyzes the phosphorolysis of S-methyl-5'-thioadenosine into adenine and S-methyl-5-thio-alpha-D-ribose 1-phosphate. Also has adenosine deaminase activity.</text>
</comment>
<comment type="catalytic activity">
    <reaction evidence="2">
        <text>adenosine + phosphate = alpha-D-ribose 1-phosphate + adenine</text>
        <dbReference type="Rhea" id="RHEA:27642"/>
        <dbReference type="ChEBI" id="CHEBI:16335"/>
        <dbReference type="ChEBI" id="CHEBI:16708"/>
        <dbReference type="ChEBI" id="CHEBI:43474"/>
        <dbReference type="ChEBI" id="CHEBI:57720"/>
        <dbReference type="EC" id="2.4.2.1"/>
    </reaction>
    <physiologicalReaction direction="left-to-right" evidence="2">
        <dbReference type="Rhea" id="RHEA:27643"/>
    </physiologicalReaction>
</comment>
<comment type="catalytic activity">
    <reaction evidence="2">
        <text>S-methyl-5'-thioadenosine + phosphate = 5-(methylsulfanyl)-alpha-D-ribose 1-phosphate + adenine</text>
        <dbReference type="Rhea" id="RHEA:11852"/>
        <dbReference type="ChEBI" id="CHEBI:16708"/>
        <dbReference type="ChEBI" id="CHEBI:17509"/>
        <dbReference type="ChEBI" id="CHEBI:43474"/>
        <dbReference type="ChEBI" id="CHEBI:58533"/>
        <dbReference type="EC" id="2.4.2.28"/>
    </reaction>
    <physiologicalReaction direction="left-to-right" evidence="2">
        <dbReference type="Rhea" id="RHEA:11853"/>
    </physiologicalReaction>
</comment>
<comment type="catalytic activity">
    <reaction evidence="2">
        <text>inosine + phosphate = alpha-D-ribose 1-phosphate + hypoxanthine</text>
        <dbReference type="Rhea" id="RHEA:27646"/>
        <dbReference type="ChEBI" id="CHEBI:17368"/>
        <dbReference type="ChEBI" id="CHEBI:17596"/>
        <dbReference type="ChEBI" id="CHEBI:43474"/>
        <dbReference type="ChEBI" id="CHEBI:57720"/>
        <dbReference type="EC" id="2.4.2.1"/>
    </reaction>
    <physiologicalReaction direction="left-to-right" evidence="2">
        <dbReference type="Rhea" id="RHEA:27647"/>
    </physiologicalReaction>
</comment>
<comment type="catalytic activity">
    <reaction evidence="2">
        <text>adenosine + H2O + H(+) = inosine + NH4(+)</text>
        <dbReference type="Rhea" id="RHEA:24408"/>
        <dbReference type="ChEBI" id="CHEBI:15377"/>
        <dbReference type="ChEBI" id="CHEBI:15378"/>
        <dbReference type="ChEBI" id="CHEBI:16335"/>
        <dbReference type="ChEBI" id="CHEBI:17596"/>
        <dbReference type="ChEBI" id="CHEBI:28938"/>
        <dbReference type="EC" id="3.5.4.4"/>
    </reaction>
    <physiologicalReaction direction="left-to-right" evidence="2">
        <dbReference type="Rhea" id="RHEA:24409"/>
    </physiologicalReaction>
</comment>
<comment type="cofactor">
    <cofactor evidence="1">
        <name>Cu(2+)</name>
        <dbReference type="ChEBI" id="CHEBI:29036"/>
    </cofactor>
    <cofactor evidence="2">
        <name>Zn(2+)</name>
        <dbReference type="ChEBI" id="CHEBI:29105"/>
    </cofactor>
</comment>
<comment type="subunit">
    <text evidence="3">Homodimer.</text>
</comment>
<comment type="similarity">
    <text evidence="4">Belongs to the purine nucleoside phosphorylase YfiH/LACC1 family.</text>
</comment>
<keyword id="KW-0186">Copper</keyword>
<keyword id="KW-0378">Hydrolase</keyword>
<keyword id="KW-0479">Metal-binding</keyword>
<keyword id="KW-0560">Oxidoreductase</keyword>
<keyword id="KW-1185">Reference proteome</keyword>
<keyword id="KW-0808">Transferase</keyword>
<keyword id="KW-0862">Zinc</keyword>
<proteinExistence type="inferred from homology"/>
<sequence length="226" mass="26064">MGRSRKNFLSLLENDKVGIFCAFDKDYNVFRAKIHNENLFSHLGFKDIEKCVFMDQIHSHKVIIYDENLKNLSCDGLISKEKNIALCVLSADCLPLILYHESGIIAALHSGRKGSFENILKECVDQITMQNSHLDKNKFHLFILPGICAKNYEIDGEILEFAKKEFKEFVQDDKLDLKALVKFQAQNLGIENIKDCGICSFDDESFFSYRRDKTTKRFVSVVYLKD</sequence>
<evidence type="ECO:0000250" key="1">
    <source>
        <dbReference type="UniProtKB" id="P33644"/>
    </source>
</evidence>
<evidence type="ECO:0000250" key="2">
    <source>
        <dbReference type="UniProtKB" id="P84138"/>
    </source>
</evidence>
<evidence type="ECO:0000250" key="3">
    <source>
        <dbReference type="UniProtKB" id="Q1EIR0"/>
    </source>
</evidence>
<evidence type="ECO:0000305" key="4"/>
<dbReference type="EC" id="2.4.2.1" evidence="2"/>
<dbReference type="EC" id="3.5.4.4" evidence="2"/>
<dbReference type="EC" id="2.4.2.28" evidence="2"/>
<dbReference type="EMBL" id="AL111168">
    <property type="protein sequence ID" value="CAL35332.1"/>
    <property type="molecule type" value="Genomic_DNA"/>
</dbReference>
<dbReference type="PIR" id="C81328">
    <property type="entry name" value="C81328"/>
</dbReference>
<dbReference type="RefSeq" id="WP_002852800.1">
    <property type="nucleotide sequence ID" value="NZ_SZUC01000001.1"/>
</dbReference>
<dbReference type="RefSeq" id="YP_002344608.1">
    <property type="nucleotide sequence ID" value="NC_002163.1"/>
</dbReference>
<dbReference type="SMR" id="Q9PN78"/>
<dbReference type="IntAct" id="Q9PN78">
    <property type="interactions" value="10"/>
</dbReference>
<dbReference type="STRING" id="192222.Cj1217c"/>
<dbReference type="PaxDb" id="192222-Cj1217c"/>
<dbReference type="EnsemblBacteria" id="CAL35332">
    <property type="protein sequence ID" value="CAL35332"/>
    <property type="gene ID" value="Cj1217c"/>
</dbReference>
<dbReference type="GeneID" id="905507"/>
<dbReference type="KEGG" id="cje:Cj1217c"/>
<dbReference type="PATRIC" id="fig|192222.6.peg.1199"/>
<dbReference type="eggNOG" id="COG1496">
    <property type="taxonomic scope" value="Bacteria"/>
</dbReference>
<dbReference type="HOGENOM" id="CLU_065784_4_0_7"/>
<dbReference type="OrthoDB" id="4279at2"/>
<dbReference type="Proteomes" id="UP000000799">
    <property type="component" value="Chromosome"/>
</dbReference>
<dbReference type="GO" id="GO:0004000">
    <property type="term" value="F:adenosine deaminase activity"/>
    <property type="evidence" value="ECO:0007669"/>
    <property type="project" value="RHEA"/>
</dbReference>
<dbReference type="GO" id="GO:0005507">
    <property type="term" value="F:copper ion binding"/>
    <property type="evidence" value="ECO:0007669"/>
    <property type="project" value="TreeGrafter"/>
</dbReference>
<dbReference type="GO" id="GO:0016491">
    <property type="term" value="F:oxidoreductase activity"/>
    <property type="evidence" value="ECO:0007669"/>
    <property type="project" value="UniProtKB-KW"/>
</dbReference>
<dbReference type="GO" id="GO:0017061">
    <property type="term" value="F:S-methyl-5-thioadenosine phosphorylase activity"/>
    <property type="evidence" value="ECO:0007669"/>
    <property type="project" value="UniProtKB-EC"/>
</dbReference>
<dbReference type="CDD" id="cd16833">
    <property type="entry name" value="YfiH"/>
    <property type="match status" value="1"/>
</dbReference>
<dbReference type="Gene3D" id="3.60.140.10">
    <property type="entry name" value="CNF1/YfiH-like putative cysteine hydrolases"/>
    <property type="match status" value="1"/>
</dbReference>
<dbReference type="InterPro" id="IPR003730">
    <property type="entry name" value="Cu_polyphenol_OxRdtase"/>
</dbReference>
<dbReference type="InterPro" id="IPR038371">
    <property type="entry name" value="Cu_polyphenol_OxRdtase_sf"/>
</dbReference>
<dbReference type="InterPro" id="IPR011324">
    <property type="entry name" value="Cytotoxic_necrot_fac-like_cat"/>
</dbReference>
<dbReference type="PANTHER" id="PTHR30616:SF2">
    <property type="entry name" value="PURINE NUCLEOSIDE PHOSPHORYLASE LACC1"/>
    <property type="match status" value="1"/>
</dbReference>
<dbReference type="PANTHER" id="PTHR30616">
    <property type="entry name" value="UNCHARACTERIZED PROTEIN YFIH"/>
    <property type="match status" value="1"/>
</dbReference>
<dbReference type="Pfam" id="PF02578">
    <property type="entry name" value="Cu-oxidase_4"/>
    <property type="match status" value="1"/>
</dbReference>
<dbReference type="SUPFAM" id="SSF64438">
    <property type="entry name" value="CNF1/YfiH-like putative cysteine hydrolases"/>
    <property type="match status" value="1"/>
</dbReference>
<reference key="1">
    <citation type="journal article" date="2000" name="Nature">
        <title>The genome sequence of the food-borne pathogen Campylobacter jejuni reveals hypervariable sequences.</title>
        <authorList>
            <person name="Parkhill J."/>
            <person name="Wren B.W."/>
            <person name="Mungall K.L."/>
            <person name="Ketley J.M."/>
            <person name="Churcher C.M."/>
            <person name="Basham D."/>
            <person name="Chillingworth T."/>
            <person name="Davies R.M."/>
            <person name="Feltwell T."/>
            <person name="Holroyd S."/>
            <person name="Jagels K."/>
            <person name="Karlyshev A.V."/>
            <person name="Moule S."/>
            <person name="Pallen M.J."/>
            <person name="Penn C.W."/>
            <person name="Quail M.A."/>
            <person name="Rajandream M.A."/>
            <person name="Rutherford K.M."/>
            <person name="van Vliet A.H.M."/>
            <person name="Whitehead S."/>
            <person name="Barrell B.G."/>
        </authorList>
    </citation>
    <scope>NUCLEOTIDE SEQUENCE [LARGE SCALE GENOMIC DNA]</scope>
    <source>
        <strain>ATCC 700819 / NCTC 11168</strain>
    </source>
</reference>
<feature type="chain" id="PRO_0000163159" description="Purine nucleoside phosphorylase Cj1217c">
    <location>
        <begin position="1"/>
        <end position="226"/>
    </location>
</feature>
<feature type="binding site" evidence="2">
    <location>
        <position position="58"/>
    </location>
    <ligand>
        <name>Zn(2+)</name>
        <dbReference type="ChEBI" id="CHEBI:29105"/>
        <note>catalytic</note>
    </ligand>
</feature>
<feature type="binding site" evidence="2">
    <location>
        <position position="93"/>
    </location>
    <ligand>
        <name>Zn(2+)</name>
        <dbReference type="ChEBI" id="CHEBI:29105"/>
        <note>catalytic</note>
    </ligand>
</feature>
<feature type="binding site" evidence="2">
    <location>
        <position position="109"/>
    </location>
    <ligand>
        <name>Zn(2+)</name>
        <dbReference type="ChEBI" id="CHEBI:29105"/>
        <note>catalytic</note>
    </ligand>
</feature>
<organism>
    <name type="scientific">Campylobacter jejuni subsp. jejuni serotype O:2 (strain ATCC 700819 / NCTC 11168)</name>
    <dbReference type="NCBI Taxonomy" id="192222"/>
    <lineage>
        <taxon>Bacteria</taxon>
        <taxon>Pseudomonadati</taxon>
        <taxon>Campylobacterota</taxon>
        <taxon>Epsilonproteobacteria</taxon>
        <taxon>Campylobacterales</taxon>
        <taxon>Campylobacteraceae</taxon>
        <taxon>Campylobacter</taxon>
    </lineage>
</organism>
<name>PURNU_CAMJE</name>
<gene>
    <name type="ordered locus">Cj1217c</name>
</gene>